<sequence length="343" mass="39534">MKNILNFTLDELKDWMDKNSESKFRAKQIFQWIYKKAVFNFDDMSNISKSTKEKLKENFYIQIPNVVKKYVSNIDGTEKFLFEYEDGNIIESVVMKYKHGNSICVSTQIGCRMGCKFCASTVDGVVRNLTSGEIIAQVLKAQKEICDRISNVVLMGSGEPLDNYDNVIKFLKLINDEDALNIGQRHITLSTCGIVPKIKELADQKMQITLAISLHAPNNEIRKSMMPIANKYTLEELLDACRYYYRTTNRRITFEYALVKGVNDSRENAEELIKISKGMLCHINLIPVNEIKENNYERSKSKDIEEFKETLIKHGIETTIRREMGSDINGACGQLRRNYIRNN</sequence>
<proteinExistence type="inferred from homology"/>
<protein>
    <recommendedName>
        <fullName evidence="1">Probable dual-specificity RNA methyltransferase RlmN</fullName>
        <ecNumber evidence="1">2.1.1.192</ecNumber>
    </recommendedName>
    <alternativeName>
        <fullName evidence="1">23S rRNA (adenine(2503)-C(2))-methyltransferase</fullName>
    </alternativeName>
    <alternativeName>
        <fullName evidence="1">23S rRNA m2A2503 methyltransferase</fullName>
    </alternativeName>
    <alternativeName>
        <fullName evidence="1">Ribosomal RNA large subunit methyltransferase N</fullName>
    </alternativeName>
    <alternativeName>
        <fullName evidence="1">tRNA (adenine(37)-C(2))-methyltransferase</fullName>
    </alternativeName>
    <alternativeName>
        <fullName evidence="1">tRNA m2A37 methyltransferase</fullName>
    </alternativeName>
</protein>
<dbReference type="EC" id="2.1.1.192" evidence="1"/>
<dbReference type="EMBL" id="CP000382">
    <property type="protein sequence ID" value="ABK61723.1"/>
    <property type="molecule type" value="Genomic_DNA"/>
</dbReference>
<dbReference type="RefSeq" id="WP_011722311.1">
    <property type="nucleotide sequence ID" value="NC_008593.1"/>
</dbReference>
<dbReference type="SMR" id="A0Q112"/>
<dbReference type="STRING" id="386415.NT01CX_2241"/>
<dbReference type="KEGG" id="cno:NT01CX_2241"/>
<dbReference type="eggNOG" id="COG0820">
    <property type="taxonomic scope" value="Bacteria"/>
</dbReference>
<dbReference type="HOGENOM" id="CLU_029101_0_1_9"/>
<dbReference type="Proteomes" id="UP000008220">
    <property type="component" value="Chromosome"/>
</dbReference>
<dbReference type="GO" id="GO:0005737">
    <property type="term" value="C:cytoplasm"/>
    <property type="evidence" value="ECO:0007669"/>
    <property type="project" value="UniProtKB-SubCell"/>
</dbReference>
<dbReference type="GO" id="GO:0051539">
    <property type="term" value="F:4 iron, 4 sulfur cluster binding"/>
    <property type="evidence" value="ECO:0007669"/>
    <property type="project" value="UniProtKB-UniRule"/>
</dbReference>
<dbReference type="GO" id="GO:0046872">
    <property type="term" value="F:metal ion binding"/>
    <property type="evidence" value="ECO:0007669"/>
    <property type="project" value="UniProtKB-KW"/>
</dbReference>
<dbReference type="GO" id="GO:0070040">
    <property type="term" value="F:rRNA (adenine(2503)-C2-)-methyltransferase activity"/>
    <property type="evidence" value="ECO:0007669"/>
    <property type="project" value="UniProtKB-UniRule"/>
</dbReference>
<dbReference type="GO" id="GO:0019843">
    <property type="term" value="F:rRNA binding"/>
    <property type="evidence" value="ECO:0007669"/>
    <property type="project" value="UniProtKB-UniRule"/>
</dbReference>
<dbReference type="GO" id="GO:0002935">
    <property type="term" value="F:tRNA (adenine(37)-C2)-methyltransferase activity"/>
    <property type="evidence" value="ECO:0007669"/>
    <property type="project" value="UniProtKB-UniRule"/>
</dbReference>
<dbReference type="GO" id="GO:0000049">
    <property type="term" value="F:tRNA binding"/>
    <property type="evidence" value="ECO:0007669"/>
    <property type="project" value="UniProtKB-UniRule"/>
</dbReference>
<dbReference type="GO" id="GO:0070475">
    <property type="term" value="P:rRNA base methylation"/>
    <property type="evidence" value="ECO:0007669"/>
    <property type="project" value="UniProtKB-UniRule"/>
</dbReference>
<dbReference type="GO" id="GO:0030488">
    <property type="term" value="P:tRNA methylation"/>
    <property type="evidence" value="ECO:0007669"/>
    <property type="project" value="UniProtKB-UniRule"/>
</dbReference>
<dbReference type="CDD" id="cd01335">
    <property type="entry name" value="Radical_SAM"/>
    <property type="match status" value="1"/>
</dbReference>
<dbReference type="FunFam" id="3.20.20.70:FF:000014">
    <property type="entry name" value="Probable dual-specificity RNA methyltransferase RlmN"/>
    <property type="match status" value="1"/>
</dbReference>
<dbReference type="Gene3D" id="1.10.150.530">
    <property type="match status" value="1"/>
</dbReference>
<dbReference type="Gene3D" id="3.20.20.70">
    <property type="entry name" value="Aldolase class I"/>
    <property type="match status" value="1"/>
</dbReference>
<dbReference type="HAMAP" id="MF_01849">
    <property type="entry name" value="RNA_methyltr_RlmN"/>
    <property type="match status" value="1"/>
</dbReference>
<dbReference type="InterPro" id="IPR013785">
    <property type="entry name" value="Aldolase_TIM"/>
</dbReference>
<dbReference type="InterPro" id="IPR040072">
    <property type="entry name" value="Methyltransferase_A"/>
</dbReference>
<dbReference type="InterPro" id="IPR048641">
    <property type="entry name" value="RlmN_N"/>
</dbReference>
<dbReference type="InterPro" id="IPR027492">
    <property type="entry name" value="RNA_MTrfase_RlmN"/>
</dbReference>
<dbReference type="InterPro" id="IPR004383">
    <property type="entry name" value="rRNA_lsu_MTrfase_RlmN/Cfr"/>
</dbReference>
<dbReference type="InterPro" id="IPR007197">
    <property type="entry name" value="rSAM"/>
</dbReference>
<dbReference type="NCBIfam" id="TIGR00048">
    <property type="entry name" value="rRNA_mod_RlmN"/>
    <property type="match status" value="1"/>
</dbReference>
<dbReference type="PANTHER" id="PTHR30544">
    <property type="entry name" value="23S RRNA METHYLTRANSFERASE"/>
    <property type="match status" value="1"/>
</dbReference>
<dbReference type="PANTHER" id="PTHR30544:SF5">
    <property type="entry name" value="RADICAL SAM CORE DOMAIN-CONTAINING PROTEIN"/>
    <property type="match status" value="1"/>
</dbReference>
<dbReference type="Pfam" id="PF04055">
    <property type="entry name" value="Radical_SAM"/>
    <property type="match status" value="1"/>
</dbReference>
<dbReference type="Pfam" id="PF21016">
    <property type="entry name" value="RlmN_N"/>
    <property type="match status" value="1"/>
</dbReference>
<dbReference type="PIRSF" id="PIRSF006004">
    <property type="entry name" value="CHP00048"/>
    <property type="match status" value="1"/>
</dbReference>
<dbReference type="SFLD" id="SFLDF00275">
    <property type="entry name" value="adenosine_C2_methyltransferase"/>
    <property type="match status" value="1"/>
</dbReference>
<dbReference type="SFLD" id="SFLDS00029">
    <property type="entry name" value="Radical_SAM"/>
    <property type="match status" value="1"/>
</dbReference>
<dbReference type="SUPFAM" id="SSF102114">
    <property type="entry name" value="Radical SAM enzymes"/>
    <property type="match status" value="1"/>
</dbReference>
<dbReference type="PROSITE" id="PS51918">
    <property type="entry name" value="RADICAL_SAM"/>
    <property type="match status" value="1"/>
</dbReference>
<accession>A0Q112</accession>
<feature type="chain" id="PRO_0000350125" description="Probable dual-specificity RNA methyltransferase RlmN">
    <location>
        <begin position="1"/>
        <end position="343"/>
    </location>
</feature>
<feature type="domain" description="Radical SAM core" evidence="2">
    <location>
        <begin position="97"/>
        <end position="327"/>
    </location>
</feature>
<feature type="active site" description="Proton acceptor" evidence="1">
    <location>
        <position position="91"/>
    </location>
</feature>
<feature type="active site" description="S-methylcysteine intermediate" evidence="1">
    <location>
        <position position="332"/>
    </location>
</feature>
<feature type="binding site" evidence="1">
    <location>
        <position position="111"/>
    </location>
    <ligand>
        <name>[4Fe-4S] cluster</name>
        <dbReference type="ChEBI" id="CHEBI:49883"/>
        <note>4Fe-4S-S-AdoMet</note>
    </ligand>
</feature>
<feature type="binding site" evidence="1">
    <location>
        <position position="115"/>
    </location>
    <ligand>
        <name>[4Fe-4S] cluster</name>
        <dbReference type="ChEBI" id="CHEBI:49883"/>
        <note>4Fe-4S-S-AdoMet</note>
    </ligand>
</feature>
<feature type="binding site" evidence="1">
    <location>
        <position position="118"/>
    </location>
    <ligand>
        <name>[4Fe-4S] cluster</name>
        <dbReference type="ChEBI" id="CHEBI:49883"/>
        <note>4Fe-4S-S-AdoMet</note>
    </ligand>
</feature>
<feature type="binding site" evidence="1">
    <location>
        <begin position="158"/>
        <end position="159"/>
    </location>
    <ligand>
        <name>S-adenosyl-L-methionine</name>
        <dbReference type="ChEBI" id="CHEBI:59789"/>
    </ligand>
</feature>
<feature type="binding site" evidence="1">
    <location>
        <position position="190"/>
    </location>
    <ligand>
        <name>S-adenosyl-L-methionine</name>
        <dbReference type="ChEBI" id="CHEBI:59789"/>
    </ligand>
</feature>
<feature type="binding site" evidence="1">
    <location>
        <begin position="213"/>
        <end position="215"/>
    </location>
    <ligand>
        <name>S-adenosyl-L-methionine</name>
        <dbReference type="ChEBI" id="CHEBI:59789"/>
    </ligand>
</feature>
<feature type="binding site" evidence="1">
    <location>
        <position position="289"/>
    </location>
    <ligand>
        <name>S-adenosyl-L-methionine</name>
        <dbReference type="ChEBI" id="CHEBI:59789"/>
    </ligand>
</feature>
<feature type="disulfide bond" description="(transient)" evidence="1">
    <location>
        <begin position="104"/>
        <end position="332"/>
    </location>
</feature>
<reference key="1">
    <citation type="journal article" date="2006" name="Nat. Biotechnol.">
        <title>The genome and transcriptomes of the anti-tumor agent Clostridium novyi-NT.</title>
        <authorList>
            <person name="Bettegowda C."/>
            <person name="Huang X."/>
            <person name="Lin J."/>
            <person name="Cheong I."/>
            <person name="Kohli M."/>
            <person name="Szabo S.A."/>
            <person name="Zhang X."/>
            <person name="Diaz L.A. Jr."/>
            <person name="Velculescu V.E."/>
            <person name="Parmigiani G."/>
            <person name="Kinzler K.W."/>
            <person name="Vogelstein B."/>
            <person name="Zhou S."/>
        </authorList>
    </citation>
    <scope>NUCLEOTIDE SEQUENCE [LARGE SCALE GENOMIC DNA]</scope>
    <source>
        <strain>NT</strain>
    </source>
</reference>
<comment type="function">
    <text evidence="1">Specifically methylates position 2 of adenine 2503 in 23S rRNA and position 2 of adenine 37 in tRNAs.</text>
</comment>
<comment type="catalytic activity">
    <reaction evidence="1">
        <text>adenosine(2503) in 23S rRNA + 2 reduced [2Fe-2S]-[ferredoxin] + 2 S-adenosyl-L-methionine = 2-methyladenosine(2503) in 23S rRNA + 5'-deoxyadenosine + L-methionine + 2 oxidized [2Fe-2S]-[ferredoxin] + S-adenosyl-L-homocysteine</text>
        <dbReference type="Rhea" id="RHEA:42916"/>
        <dbReference type="Rhea" id="RHEA-COMP:10000"/>
        <dbReference type="Rhea" id="RHEA-COMP:10001"/>
        <dbReference type="Rhea" id="RHEA-COMP:10152"/>
        <dbReference type="Rhea" id="RHEA-COMP:10282"/>
        <dbReference type="ChEBI" id="CHEBI:17319"/>
        <dbReference type="ChEBI" id="CHEBI:33737"/>
        <dbReference type="ChEBI" id="CHEBI:33738"/>
        <dbReference type="ChEBI" id="CHEBI:57844"/>
        <dbReference type="ChEBI" id="CHEBI:57856"/>
        <dbReference type="ChEBI" id="CHEBI:59789"/>
        <dbReference type="ChEBI" id="CHEBI:74411"/>
        <dbReference type="ChEBI" id="CHEBI:74497"/>
        <dbReference type="EC" id="2.1.1.192"/>
    </reaction>
</comment>
<comment type="catalytic activity">
    <reaction evidence="1">
        <text>adenosine(37) in tRNA + 2 reduced [2Fe-2S]-[ferredoxin] + 2 S-adenosyl-L-methionine = 2-methyladenosine(37) in tRNA + 5'-deoxyadenosine + L-methionine + 2 oxidized [2Fe-2S]-[ferredoxin] + S-adenosyl-L-homocysteine</text>
        <dbReference type="Rhea" id="RHEA:43332"/>
        <dbReference type="Rhea" id="RHEA-COMP:10000"/>
        <dbReference type="Rhea" id="RHEA-COMP:10001"/>
        <dbReference type="Rhea" id="RHEA-COMP:10162"/>
        <dbReference type="Rhea" id="RHEA-COMP:10485"/>
        <dbReference type="ChEBI" id="CHEBI:17319"/>
        <dbReference type="ChEBI" id="CHEBI:33737"/>
        <dbReference type="ChEBI" id="CHEBI:33738"/>
        <dbReference type="ChEBI" id="CHEBI:57844"/>
        <dbReference type="ChEBI" id="CHEBI:57856"/>
        <dbReference type="ChEBI" id="CHEBI:59789"/>
        <dbReference type="ChEBI" id="CHEBI:74411"/>
        <dbReference type="ChEBI" id="CHEBI:74497"/>
        <dbReference type="EC" id="2.1.1.192"/>
    </reaction>
</comment>
<comment type="cofactor">
    <cofactor evidence="1">
        <name>[4Fe-4S] cluster</name>
        <dbReference type="ChEBI" id="CHEBI:49883"/>
    </cofactor>
    <text evidence="1">Binds 1 [4Fe-4S] cluster. The cluster is coordinated with 3 cysteines and an exchangeable S-adenosyl-L-methionine.</text>
</comment>
<comment type="subcellular location">
    <subcellularLocation>
        <location evidence="1">Cytoplasm</location>
    </subcellularLocation>
</comment>
<comment type="miscellaneous">
    <text evidence="1">Reaction proceeds by a ping-pong mechanism involving intermediate methylation of a conserved cysteine residue.</text>
</comment>
<comment type="similarity">
    <text evidence="1">Belongs to the radical SAM superfamily. RlmN family.</text>
</comment>
<gene>
    <name evidence="1" type="primary">rlmN</name>
    <name type="ordered locus">NT01CX_2241</name>
</gene>
<evidence type="ECO:0000255" key="1">
    <source>
        <dbReference type="HAMAP-Rule" id="MF_01849"/>
    </source>
</evidence>
<evidence type="ECO:0000255" key="2">
    <source>
        <dbReference type="PROSITE-ProRule" id="PRU01266"/>
    </source>
</evidence>
<organism>
    <name type="scientific">Clostridium novyi (strain NT)</name>
    <dbReference type="NCBI Taxonomy" id="386415"/>
    <lineage>
        <taxon>Bacteria</taxon>
        <taxon>Bacillati</taxon>
        <taxon>Bacillota</taxon>
        <taxon>Clostridia</taxon>
        <taxon>Eubacteriales</taxon>
        <taxon>Clostridiaceae</taxon>
        <taxon>Clostridium</taxon>
    </lineage>
</organism>
<keyword id="KW-0004">4Fe-4S</keyword>
<keyword id="KW-0963">Cytoplasm</keyword>
<keyword id="KW-1015">Disulfide bond</keyword>
<keyword id="KW-0408">Iron</keyword>
<keyword id="KW-0411">Iron-sulfur</keyword>
<keyword id="KW-0479">Metal-binding</keyword>
<keyword id="KW-0489">Methyltransferase</keyword>
<keyword id="KW-1185">Reference proteome</keyword>
<keyword id="KW-0698">rRNA processing</keyword>
<keyword id="KW-0949">S-adenosyl-L-methionine</keyword>
<keyword id="KW-0808">Transferase</keyword>
<keyword id="KW-0819">tRNA processing</keyword>
<name>RLMN_CLONN</name>